<comment type="function">
    <text evidence="1">Myotropic peptide.</text>
</comment>
<comment type="subcellular location">
    <subcellularLocation>
        <location evidence="5">Secreted</location>
    </subcellularLocation>
</comment>
<comment type="similarity">
    <text evidence="2">Belongs to the gastrin/cholecystokinin family.</text>
</comment>
<proteinExistence type="evidence at protein level"/>
<sequence length="11" mass="1445">EQFDDYGHMRF</sequence>
<keyword id="KW-0027">Amidation</keyword>
<keyword id="KW-0903">Direct protein sequencing</keyword>
<keyword id="KW-0372">Hormone</keyword>
<keyword id="KW-0527">Neuropeptide</keyword>
<keyword id="KW-0964">Secreted</keyword>
<keyword id="KW-0765">Sulfation</keyword>
<feature type="peptide" id="PRO_0000378867" description="Sulfakinin-1" evidence="3">
    <location>
        <begin position="1"/>
        <end position="11"/>
    </location>
</feature>
<feature type="modified residue" description="Sulfotyrosine" evidence="1">
    <location>
        <position position="6"/>
    </location>
</feature>
<feature type="modified residue" description="Phenylalanine amide" evidence="3">
    <location>
        <position position="11"/>
    </location>
</feature>
<evidence type="ECO:0000250" key="1">
    <source>
        <dbReference type="UniProtKB" id="P41493"/>
    </source>
</evidence>
<evidence type="ECO:0000255" key="2"/>
<evidence type="ECO:0000269" key="3">
    <source>
    </source>
</evidence>
<evidence type="ECO:0000303" key="4">
    <source>
    </source>
</evidence>
<evidence type="ECO:0000305" key="5"/>
<organism>
    <name type="scientific">Cryptocercus kyebangensis</name>
    <name type="common">Brown-hooded cockroach</name>
    <dbReference type="NCBI Taxonomy" id="161578"/>
    <lineage>
        <taxon>Eukaryota</taxon>
        <taxon>Metazoa</taxon>
        <taxon>Ecdysozoa</taxon>
        <taxon>Arthropoda</taxon>
        <taxon>Hexapoda</taxon>
        <taxon>Insecta</taxon>
        <taxon>Pterygota</taxon>
        <taxon>Neoptera</taxon>
        <taxon>Polyneoptera</taxon>
        <taxon>Dictyoptera</taxon>
        <taxon>Blattodea</taxon>
        <taxon>Blattoidea</taxon>
        <taxon>Cryptocercidae</taxon>
        <taxon>Cryptocercus</taxon>
    </lineage>
</organism>
<accession>P85576</accession>
<name>SK1_CRYKY</name>
<protein>
    <recommendedName>
        <fullName evidence="4">Sulfakinin-1</fullName>
        <shortName evidence="4">CryKy-SK-1</shortName>
    </recommendedName>
</protein>
<reference evidence="5" key="1">
    <citation type="journal article" date="2009" name="BMC Evol. Biol.">
        <title>A proteomic approach for studying insect phylogeny: CAPA peptides of ancient insect taxa (Dictyoptera, Blattoptera) as a test case.</title>
        <authorList>
            <person name="Roth S."/>
            <person name="Fromm B."/>
            <person name="Gaede G."/>
            <person name="Predel R."/>
        </authorList>
    </citation>
    <scope>PROTEIN SEQUENCE</scope>
    <scope>AMIDATION AT PHE-11</scope>
    <source>
        <tissue evidence="3">Corpora cardiaca</tissue>
    </source>
</reference>
<dbReference type="GO" id="GO:0005576">
    <property type="term" value="C:extracellular region"/>
    <property type="evidence" value="ECO:0007669"/>
    <property type="project" value="UniProtKB-SubCell"/>
</dbReference>
<dbReference type="GO" id="GO:0005179">
    <property type="term" value="F:hormone activity"/>
    <property type="evidence" value="ECO:0007669"/>
    <property type="project" value="UniProtKB-KW"/>
</dbReference>
<dbReference type="GO" id="GO:0007218">
    <property type="term" value="P:neuropeptide signaling pathway"/>
    <property type="evidence" value="ECO:0007669"/>
    <property type="project" value="UniProtKB-KW"/>
</dbReference>
<dbReference type="InterPro" id="IPR013152">
    <property type="entry name" value="Gastrin/cholecystokinin_CS"/>
</dbReference>
<dbReference type="InterPro" id="IPR013259">
    <property type="entry name" value="Sulfakinin"/>
</dbReference>
<dbReference type="Pfam" id="PF08257">
    <property type="entry name" value="Sulfakinin"/>
    <property type="match status" value="1"/>
</dbReference>
<dbReference type="PROSITE" id="PS00259">
    <property type="entry name" value="GASTRIN"/>
    <property type="match status" value="1"/>
</dbReference>